<reference key="1">
    <citation type="journal article" date="1995" name="Nature">
        <title>Cloning of the amiloride-sensitive FMRFamide peptide-gated sodium channel.</title>
        <authorList>
            <person name="Lingueglia E."/>
            <person name="Champigny G."/>
            <person name="Lazdunski M."/>
            <person name="Barbry P."/>
        </authorList>
    </citation>
    <scope>NUCLEOTIDE SEQUENCE [MRNA]</scope>
    <source>
        <tissue>Nerve</tissue>
    </source>
</reference>
<dbReference type="EMBL" id="X92113">
    <property type="protein sequence ID" value="CAA63084.1"/>
    <property type="molecule type" value="mRNA"/>
</dbReference>
<dbReference type="PIR" id="S68434">
    <property type="entry name" value="S68434"/>
</dbReference>
<dbReference type="SMR" id="Q25011"/>
<dbReference type="TCDB" id="1.A.6.3.1">
    <property type="family name" value="the epithelial na(+) channel (enac) family"/>
</dbReference>
<dbReference type="GO" id="GO:0005886">
    <property type="term" value="C:plasma membrane"/>
    <property type="evidence" value="ECO:0007669"/>
    <property type="project" value="TreeGrafter"/>
</dbReference>
<dbReference type="GO" id="GO:0015280">
    <property type="term" value="F:ligand-gated sodium channel activity"/>
    <property type="evidence" value="ECO:0007669"/>
    <property type="project" value="TreeGrafter"/>
</dbReference>
<dbReference type="Gene3D" id="2.60.470.10">
    <property type="entry name" value="Acid-sensing ion channels like domains"/>
    <property type="match status" value="1"/>
</dbReference>
<dbReference type="Gene3D" id="1.10.287.770">
    <property type="entry name" value="YojJ-like"/>
    <property type="match status" value="1"/>
</dbReference>
<dbReference type="InterPro" id="IPR001873">
    <property type="entry name" value="ENaC"/>
</dbReference>
<dbReference type="InterPro" id="IPR020903">
    <property type="entry name" value="ENaC_CS"/>
</dbReference>
<dbReference type="PANTHER" id="PTHR11690">
    <property type="entry name" value="AMILORIDE-SENSITIVE SODIUM CHANNEL-RELATED"/>
    <property type="match status" value="1"/>
</dbReference>
<dbReference type="PANTHER" id="PTHR11690:SF248">
    <property type="entry name" value="PICKPOCKET 17, ISOFORM A"/>
    <property type="match status" value="1"/>
</dbReference>
<dbReference type="Pfam" id="PF00858">
    <property type="entry name" value="ASC"/>
    <property type="match status" value="1"/>
</dbReference>
<dbReference type="PRINTS" id="PR01078">
    <property type="entry name" value="AMINACHANNEL"/>
</dbReference>
<dbReference type="PROSITE" id="PS01206">
    <property type="entry name" value="ASC"/>
    <property type="match status" value="1"/>
</dbReference>
<feature type="chain" id="PRO_0000181312" description="FMRFamide-activated amiloride-sensitive sodium channel">
    <location>
        <begin position="1"/>
        <end position="625"/>
    </location>
</feature>
<feature type="topological domain" description="Cytoplasmic" evidence="1">
    <location>
        <begin position="1"/>
        <end position="67"/>
    </location>
</feature>
<feature type="transmembrane region" description="Helical" evidence="1">
    <location>
        <begin position="68"/>
        <end position="89"/>
    </location>
</feature>
<feature type="topological domain" description="Extracellular" evidence="1">
    <location>
        <begin position="90"/>
        <end position="536"/>
    </location>
</feature>
<feature type="transmembrane region" description="Helical" evidence="1">
    <location>
        <begin position="537"/>
        <end position="557"/>
    </location>
</feature>
<feature type="topological domain" description="Cytoplasmic" evidence="1">
    <location>
        <begin position="558"/>
        <end position="625"/>
    </location>
</feature>
<feature type="region of interest" description="Disordered" evidence="2">
    <location>
        <begin position="570"/>
        <end position="591"/>
    </location>
</feature>
<feature type="compositionally biased region" description="Low complexity" evidence="2">
    <location>
        <begin position="575"/>
        <end position="591"/>
    </location>
</feature>
<feature type="glycosylation site" description="N-linked (GlcNAc...) asparagine" evidence="1">
    <location>
        <position position="134"/>
    </location>
</feature>
<feature type="glycosylation site" description="N-linked (GlcNAc...) asparagine" evidence="1">
    <location>
        <position position="196"/>
    </location>
</feature>
<feature type="glycosylation site" description="N-linked (GlcNAc...) asparagine" evidence="1">
    <location>
        <position position="303"/>
    </location>
</feature>
<feature type="glycosylation site" description="N-linked (GlcNAc...) asparagine" evidence="1">
    <location>
        <position position="349"/>
    </location>
</feature>
<feature type="glycosylation site" description="N-linked (GlcNAc...) asparagine" evidence="1">
    <location>
        <position position="365"/>
    </location>
</feature>
<feature type="glycosylation site" description="N-linked (GlcNAc...) asparagine" evidence="1">
    <location>
        <position position="372"/>
    </location>
</feature>
<feature type="glycosylation site" description="N-linked (GlcNAc...) asparagine" evidence="1">
    <location>
        <position position="473"/>
    </location>
</feature>
<proteinExistence type="evidence at transcript level"/>
<sequence>MKYTSAATKPGVFPEHHQHAMMRNRYHPHHCNYSDNRSAIDIIAELGSESNAHGLAKIVTSRDTKRKVIWALLVIAGFTAATLQLSLLVRKYLQFQVVELSEIKDSMPVQYPSVSICNIEPISLRTIRRMYFNNESQNLITWLRFIQKFRFEQDSFMNSIRAFYENLGQDAKKLSHNLEDMLMHCRFNRELCHVSNFSTFFDGNYFNCFTFNSGQRLQMHATGPENGLSLIFSVEKDDPLPGTYGVYNFDNNILHSAGVRVVVHAPGSMPSPVDHGIDIPPGYSSSVGLKAILHTRLPYPYGNCTNDMLNGIKQYKYTFFACLQLCKQRLIIQRCGCKSSALPEVPSYNATFCGVIKDWQEINRNHSNEDHNQSEEDRAFIPTPYLACEEREQKNLNNDRTYELSCGCFQPCSETSYLKSVSLSYWPLEFYQLSAVERFFKQERQAGQNHFMKTAYEYLEKLAHPSQKHLARNDSHMDDILSKSYSLSEKEMAKEASDLIRQNMLRLNIYLEDLSVVEYRQLPAYGLADLFADIGGTLGLWMGISVLTIMELIELVIRLTGLVFNSEKGLPRGPTTVNNNNGSNNHSQSTSQHQLYNGYMDHDSHYSDSAGASVFDFRRGVESPV</sequence>
<keyword id="KW-0325">Glycoprotein</keyword>
<keyword id="KW-0407">Ion channel</keyword>
<keyword id="KW-0406">Ion transport</keyword>
<keyword id="KW-0472">Membrane</keyword>
<keyword id="KW-0915">Sodium</keyword>
<keyword id="KW-0894">Sodium channel</keyword>
<keyword id="KW-0739">Sodium transport</keyword>
<keyword id="KW-0812">Transmembrane</keyword>
<keyword id="KW-1133">Transmembrane helix</keyword>
<keyword id="KW-0813">Transport</keyword>
<comment type="function">
    <text>FMRFamide-gated ionotropic receptor.</text>
</comment>
<comment type="subcellular location">
    <subcellularLocation>
        <location>Membrane</location>
        <topology>Multi-pass membrane protein</topology>
    </subcellularLocation>
</comment>
<comment type="tissue specificity">
    <text>Muscle and nervous tissue.</text>
</comment>
<comment type="similarity">
    <text evidence="3">Belongs to the amiloride-sensitive sodium channel (TC 1.A.6) family.</text>
</comment>
<name>FANA_CORAP</name>
<accession>Q25011</accession>
<organism>
    <name type="scientific">Cornu aspersum</name>
    <name type="common">Brown garden snail</name>
    <name type="synonym">Helix aspersa</name>
    <dbReference type="NCBI Taxonomy" id="6535"/>
    <lineage>
        <taxon>Eukaryota</taxon>
        <taxon>Metazoa</taxon>
        <taxon>Spiralia</taxon>
        <taxon>Lophotrochozoa</taxon>
        <taxon>Mollusca</taxon>
        <taxon>Gastropoda</taxon>
        <taxon>Heterobranchia</taxon>
        <taxon>Euthyneura</taxon>
        <taxon>Panpulmonata</taxon>
        <taxon>Eupulmonata</taxon>
        <taxon>Stylommatophora</taxon>
        <taxon>Helicina</taxon>
        <taxon>Helicoidea</taxon>
        <taxon>Helicidae</taxon>
        <taxon>Cornu</taxon>
        <taxon>Cornu</taxon>
    </lineage>
</organism>
<protein>
    <recommendedName>
        <fullName>FMRFamide-activated amiloride-sensitive sodium channel</fullName>
    </recommendedName>
    <alternativeName>
        <fullName>FANACH</fullName>
    </alternativeName>
</protein>
<evidence type="ECO:0000255" key="1"/>
<evidence type="ECO:0000256" key="2">
    <source>
        <dbReference type="SAM" id="MobiDB-lite"/>
    </source>
</evidence>
<evidence type="ECO:0000305" key="3"/>